<reference key="1">
    <citation type="journal article" date="2007" name="PLoS ONE">
        <title>A glimpse of streptococcal toxic shock syndrome from comparative genomics of S. suis 2 Chinese isolates.</title>
        <authorList>
            <person name="Chen C."/>
            <person name="Tang J."/>
            <person name="Dong W."/>
            <person name="Wang C."/>
            <person name="Feng Y."/>
            <person name="Wang J."/>
            <person name="Zheng F."/>
            <person name="Pan X."/>
            <person name="Liu D."/>
            <person name="Li M."/>
            <person name="Song Y."/>
            <person name="Zhu X."/>
            <person name="Sun H."/>
            <person name="Feng T."/>
            <person name="Guo Z."/>
            <person name="Ju A."/>
            <person name="Ge J."/>
            <person name="Dong Y."/>
            <person name="Sun W."/>
            <person name="Jiang Y."/>
            <person name="Wang J."/>
            <person name="Yan J."/>
            <person name="Yang H."/>
            <person name="Wang X."/>
            <person name="Gao G.F."/>
            <person name="Yang R."/>
            <person name="Wang J."/>
            <person name="Yu J."/>
        </authorList>
    </citation>
    <scope>NUCLEOTIDE SEQUENCE [LARGE SCALE GENOMIC DNA]</scope>
    <source>
        <strain>98HAH33</strain>
    </source>
</reference>
<dbReference type="EMBL" id="CP000408">
    <property type="protein sequence ID" value="ABP93141.1"/>
    <property type="molecule type" value="Genomic_DNA"/>
</dbReference>
<dbReference type="SMR" id="A4W452"/>
<dbReference type="KEGG" id="ssv:SSU98_1983"/>
<dbReference type="HOGENOM" id="CLU_047155_0_1_9"/>
<dbReference type="GO" id="GO:0005737">
    <property type="term" value="C:cytoplasm"/>
    <property type="evidence" value="ECO:0007669"/>
    <property type="project" value="UniProtKB-SubCell"/>
</dbReference>
<dbReference type="GO" id="GO:0003746">
    <property type="term" value="F:translation elongation factor activity"/>
    <property type="evidence" value="ECO:0007669"/>
    <property type="project" value="UniProtKB-UniRule"/>
</dbReference>
<dbReference type="CDD" id="cd14275">
    <property type="entry name" value="UBA_EF-Ts"/>
    <property type="match status" value="1"/>
</dbReference>
<dbReference type="FunFam" id="1.10.286.20:FF:000004">
    <property type="entry name" value="Elongation factor Ts"/>
    <property type="match status" value="1"/>
</dbReference>
<dbReference type="FunFam" id="1.10.8.10:FF:000001">
    <property type="entry name" value="Elongation factor Ts"/>
    <property type="match status" value="1"/>
</dbReference>
<dbReference type="FunFam" id="3.30.479.20:FF:000009">
    <property type="entry name" value="Elongation factor Ts"/>
    <property type="match status" value="1"/>
</dbReference>
<dbReference type="FunFam" id="3.30.479.20:FF:000013">
    <property type="entry name" value="Elongation factor Ts"/>
    <property type="match status" value="1"/>
</dbReference>
<dbReference type="Gene3D" id="1.10.286.20">
    <property type="match status" value="1"/>
</dbReference>
<dbReference type="Gene3D" id="1.10.8.10">
    <property type="entry name" value="DNA helicase RuvA subunit, C-terminal domain"/>
    <property type="match status" value="1"/>
</dbReference>
<dbReference type="Gene3D" id="3.30.479.20">
    <property type="entry name" value="Elongation factor Ts, dimerisation domain"/>
    <property type="match status" value="2"/>
</dbReference>
<dbReference type="HAMAP" id="MF_00050">
    <property type="entry name" value="EF_Ts"/>
    <property type="match status" value="1"/>
</dbReference>
<dbReference type="InterPro" id="IPR036402">
    <property type="entry name" value="EF-Ts_dimer_sf"/>
</dbReference>
<dbReference type="InterPro" id="IPR001816">
    <property type="entry name" value="Transl_elong_EFTs/EF1B"/>
</dbReference>
<dbReference type="InterPro" id="IPR014039">
    <property type="entry name" value="Transl_elong_EFTs/EF1B_dimer"/>
</dbReference>
<dbReference type="InterPro" id="IPR018101">
    <property type="entry name" value="Transl_elong_Ts_CS"/>
</dbReference>
<dbReference type="InterPro" id="IPR009060">
    <property type="entry name" value="UBA-like_sf"/>
</dbReference>
<dbReference type="NCBIfam" id="TIGR00116">
    <property type="entry name" value="tsf"/>
    <property type="match status" value="1"/>
</dbReference>
<dbReference type="PANTHER" id="PTHR11741">
    <property type="entry name" value="ELONGATION FACTOR TS"/>
    <property type="match status" value="1"/>
</dbReference>
<dbReference type="PANTHER" id="PTHR11741:SF0">
    <property type="entry name" value="ELONGATION FACTOR TS, MITOCHONDRIAL"/>
    <property type="match status" value="1"/>
</dbReference>
<dbReference type="Pfam" id="PF00889">
    <property type="entry name" value="EF_TS"/>
    <property type="match status" value="2"/>
</dbReference>
<dbReference type="SUPFAM" id="SSF54713">
    <property type="entry name" value="Elongation factor Ts (EF-Ts), dimerisation domain"/>
    <property type="match status" value="1"/>
</dbReference>
<dbReference type="SUPFAM" id="SSF46934">
    <property type="entry name" value="UBA-like"/>
    <property type="match status" value="1"/>
</dbReference>
<dbReference type="PROSITE" id="PS01126">
    <property type="entry name" value="EF_TS_1"/>
    <property type="match status" value="1"/>
</dbReference>
<dbReference type="PROSITE" id="PS01127">
    <property type="entry name" value="EF_TS_2"/>
    <property type="match status" value="1"/>
</dbReference>
<protein>
    <recommendedName>
        <fullName evidence="1">Elongation factor Ts</fullName>
        <shortName evidence="1">EF-Ts</shortName>
    </recommendedName>
</protein>
<feature type="chain" id="PRO_1000006192" description="Elongation factor Ts">
    <location>
        <begin position="1"/>
        <end position="346"/>
    </location>
</feature>
<feature type="region of interest" description="Involved in Mg(2+) ion dislocation from EF-Tu" evidence="1">
    <location>
        <begin position="80"/>
        <end position="83"/>
    </location>
</feature>
<gene>
    <name evidence="1" type="primary">tsf</name>
    <name type="ordered locus">SSU98_1983</name>
</gene>
<sequence length="346" mass="37201">MAEITAALVKELREKSGAGVMDAKKALVETDGDIEKAIELLREKGMAKAAKKADRVAAEGLTGVYVDGNVAAVVEVNAETDFVAKNAQFVELVNTTAKVIAEGKPADNEAALKLAMPSGETLEEAYVNATATIGEKISFRRFALVEKTDAQAFGAYQHNGGRIGVISVVDGGDETLAKQISMHIAAMKPTVLSYTELDEQFVKDELAQINHKIEQDNESRAMVNKPVLPLLKYGSKAQLTDEVIAAAEEAIKAELAAEGKPEKIWDKIIPGKMDRFLLDNTQVDQAYTLLAQVYIMDDSKTVEAYLNSVNASVVEFARFEVGEGIEKASNDFEAEVAATMAAALGK</sequence>
<accession>A4W452</accession>
<name>EFTS_STRS2</name>
<evidence type="ECO:0000255" key="1">
    <source>
        <dbReference type="HAMAP-Rule" id="MF_00050"/>
    </source>
</evidence>
<proteinExistence type="inferred from homology"/>
<keyword id="KW-0963">Cytoplasm</keyword>
<keyword id="KW-0251">Elongation factor</keyword>
<keyword id="KW-0648">Protein biosynthesis</keyword>
<comment type="function">
    <text evidence="1">Associates with the EF-Tu.GDP complex and induces the exchange of GDP to GTP. It remains bound to the aminoacyl-tRNA.EF-Tu.GTP complex up to the GTP hydrolysis stage on the ribosome.</text>
</comment>
<comment type="subcellular location">
    <subcellularLocation>
        <location evidence="1">Cytoplasm</location>
    </subcellularLocation>
</comment>
<comment type="similarity">
    <text evidence="1">Belongs to the EF-Ts family.</text>
</comment>
<organism>
    <name type="scientific">Streptococcus suis (strain 98HAH33)</name>
    <dbReference type="NCBI Taxonomy" id="391296"/>
    <lineage>
        <taxon>Bacteria</taxon>
        <taxon>Bacillati</taxon>
        <taxon>Bacillota</taxon>
        <taxon>Bacilli</taxon>
        <taxon>Lactobacillales</taxon>
        <taxon>Streptococcaceae</taxon>
        <taxon>Streptococcus</taxon>
    </lineage>
</organism>